<feature type="signal peptide" evidence="2">
    <location>
        <begin position="1"/>
        <end position="21"/>
    </location>
</feature>
<feature type="chain" id="PRO_0000008789" description="Periostin">
    <location>
        <begin position="22"/>
        <end position="836"/>
    </location>
</feature>
<feature type="domain" description="EMI" evidence="4">
    <location>
        <begin position="40"/>
        <end position="94"/>
    </location>
</feature>
<feature type="domain" description="FAS1 1" evidence="3">
    <location>
        <begin position="97"/>
        <end position="230"/>
    </location>
</feature>
<feature type="domain" description="FAS1 2" evidence="3">
    <location>
        <begin position="234"/>
        <end position="365"/>
    </location>
</feature>
<feature type="domain" description="FAS1 3" evidence="3">
    <location>
        <begin position="368"/>
        <end position="492"/>
    </location>
</feature>
<feature type="domain" description="FAS1 4" evidence="3">
    <location>
        <begin position="496"/>
        <end position="628"/>
    </location>
</feature>
<feature type="modified residue" description="S-cysteinyl cysteine" evidence="15">
    <location>
        <position position="60"/>
    </location>
</feature>
<feature type="glycosylation site" description="N-linked (GlcNAc...) asparagine" evidence="8 10">
    <location>
        <position position="599"/>
    </location>
</feature>
<feature type="disulfide bond" evidence="15 25 26">
    <location>
        <begin position="44"/>
        <end position="80"/>
    </location>
</feature>
<feature type="disulfide bond" evidence="15 25 26">
    <location>
        <begin position="69"/>
        <end position="333"/>
    </location>
</feature>
<feature type="disulfide bond" evidence="15 25 26">
    <location>
        <begin position="79"/>
        <end position="92"/>
    </location>
</feature>
<feature type="disulfide bond" evidence="15 25 26">
    <location>
        <begin position="208"/>
        <end position="311"/>
    </location>
</feature>
<feature type="disulfide bond" evidence="15 25 26">
    <location>
        <begin position="467"/>
        <end position="472"/>
    </location>
</feature>
<feature type="splice variant" id="VSP_055183" description="In isoform 6 and isoform 7." evidence="11 19">
    <original>TTKIITKVVEPKIKVIEGSLQPIIKTEGPTLTKVKIEGEPEFRLIKEGETITEVIHGEPIIKKYTKIIDGVPVEITEKETREERIITG</original>
    <variation>S</variation>
    <location>
        <begin position="670"/>
        <end position="757"/>
    </location>
</feature>
<feature type="splice variant" id="VSP_050005" description="In isoform 2 and isoform 4." evidence="18 20 21">
    <original>TTKIITKVVEPKIKVIEGSLQPIIKTEGPTLTKVKIEGEPEFRLIKEGETITEVIHGE</original>
    <variation>K</variation>
    <location>
        <begin position="670"/>
        <end position="727"/>
    </location>
</feature>
<feature type="splice variant" id="VSP_050669" description="In isoform 3 and isoform 5." evidence="17 19 22">
    <original>TTKIITKVVEPKIKVIEGSLQPIIKTEG</original>
    <variation>R</variation>
    <location>
        <begin position="670"/>
        <end position="697"/>
    </location>
</feature>
<feature type="splice variant" id="VSP_062248" description="In isoform 9 and isoform 10." evidence="11 12">
    <location>
        <begin position="697"/>
        <end position="726"/>
    </location>
</feature>
<feature type="splice variant" id="VSP_050670" description="In isoform 3, isoform 4, isoform 7, isoform 8 and isoform 10." evidence="11 12 17 19 21">
    <location>
        <begin position="783"/>
        <end position="810"/>
    </location>
</feature>
<feature type="sequence variant" id="VAR_049115" description="In dbSNP:rs9594223.">
    <original>T</original>
    <variation>I</variation>
    <location>
        <position position="339"/>
    </location>
</feature>
<feature type="sequence variant" id="VAR_049116" description="In dbSNP:rs9547952.">
    <original>V</original>
    <variation>M</variation>
    <location>
        <position position="814"/>
    </location>
</feature>
<feature type="mutagenesis site" description="No effect on homodimerization." evidence="15">
    <original>C</original>
    <variation>A</variation>
    <location>
        <position position="60"/>
    </location>
</feature>
<feature type="mutagenesis site" description="Loss of homodimerization." evidence="15">
    <original>RTA</original>
    <variation>NTS</variation>
    <location>
        <begin position="463"/>
        <end position="465"/>
    </location>
</feature>
<feature type="sequence conflict" description="In Ref. 1; BAA02836/BAA02837, 3; ABY86630/ABY86631/ABY86633 and 4; AAY15840." evidence="23" ref="1 3 4">
    <original>I</original>
    <variation>F</variation>
    <location>
        <position position="290"/>
    </location>
</feature>
<feature type="sequence conflict" description="In Ref. 1; BAA02836/BAA02837, 3; ABY86630/ABY86631/ABY86633 and 4; AAY15840." evidence="23" ref="1 3 4">
    <original>D</original>
    <variation>V</variation>
    <location>
        <position position="421"/>
    </location>
</feature>
<feature type="strand" evidence="28">
    <location>
        <begin position="43"/>
        <end position="49"/>
    </location>
</feature>
<feature type="strand" evidence="28">
    <location>
        <begin position="55"/>
        <end position="62"/>
    </location>
</feature>
<feature type="strand" evidence="28">
    <location>
        <begin position="73"/>
        <end position="79"/>
    </location>
</feature>
<feature type="helix" evidence="28">
    <location>
        <begin position="101"/>
        <end position="107"/>
    </location>
</feature>
<feature type="helix" evidence="28">
    <location>
        <begin position="111"/>
        <end position="119"/>
    </location>
</feature>
<feature type="helix" evidence="28">
    <location>
        <begin position="123"/>
        <end position="126"/>
    </location>
</feature>
<feature type="strand" evidence="28">
    <location>
        <begin position="128"/>
        <end position="130"/>
    </location>
</feature>
<feature type="strand" evidence="28">
    <location>
        <begin position="132"/>
        <end position="137"/>
    </location>
</feature>
<feature type="helix" evidence="28">
    <location>
        <begin position="139"/>
        <end position="144"/>
    </location>
</feature>
<feature type="helix" evidence="28">
    <location>
        <begin position="147"/>
        <end position="154"/>
    </location>
</feature>
<feature type="turn" evidence="28">
    <location>
        <begin position="157"/>
        <end position="159"/>
    </location>
</feature>
<feature type="helix" evidence="28">
    <location>
        <begin position="160"/>
        <end position="167"/>
    </location>
</feature>
<feature type="strand" evidence="28">
    <location>
        <begin position="169"/>
        <end position="172"/>
    </location>
</feature>
<feature type="helix" evidence="28">
    <location>
        <begin position="176"/>
        <end position="178"/>
    </location>
</feature>
<feature type="strand" evidence="28">
    <location>
        <begin position="184"/>
        <end position="186"/>
    </location>
</feature>
<feature type="strand" evidence="28">
    <location>
        <begin position="193"/>
        <end position="198"/>
    </location>
</feature>
<feature type="strand" evidence="28">
    <location>
        <begin position="204"/>
        <end position="206"/>
    </location>
</feature>
<feature type="strand" evidence="28">
    <location>
        <begin position="209"/>
        <end position="218"/>
    </location>
</feature>
<feature type="strand" evidence="28">
    <location>
        <begin position="221"/>
        <end position="228"/>
    </location>
</feature>
<feature type="helix" evidence="28">
    <location>
        <begin position="237"/>
        <end position="243"/>
    </location>
</feature>
<feature type="helix" evidence="28">
    <location>
        <begin position="245"/>
        <end position="247"/>
    </location>
</feature>
<feature type="helix" evidence="28">
    <location>
        <begin position="248"/>
        <end position="257"/>
    </location>
</feature>
<feature type="helix" evidence="28">
    <location>
        <begin position="262"/>
        <end position="264"/>
    </location>
</feature>
<feature type="strand" evidence="28">
    <location>
        <begin position="265"/>
        <end position="267"/>
    </location>
</feature>
<feature type="strand" evidence="28">
    <location>
        <begin position="269"/>
        <end position="274"/>
    </location>
</feature>
<feature type="helix" evidence="28">
    <location>
        <begin position="276"/>
        <end position="281"/>
    </location>
</feature>
<feature type="helix" evidence="28">
    <location>
        <begin position="286"/>
        <end position="292"/>
    </location>
</feature>
<feature type="helix" evidence="28">
    <location>
        <begin position="294"/>
        <end position="302"/>
    </location>
</feature>
<feature type="strand" evidence="28">
    <location>
        <begin position="305"/>
        <end position="308"/>
    </location>
</feature>
<feature type="helix" evidence="28">
    <location>
        <begin position="312"/>
        <end position="314"/>
    </location>
</feature>
<feature type="strand" evidence="28">
    <location>
        <begin position="319"/>
        <end position="323"/>
    </location>
</feature>
<feature type="strand" evidence="28">
    <location>
        <begin position="326"/>
        <end position="334"/>
    </location>
</feature>
<feature type="strand" evidence="28">
    <location>
        <begin position="337"/>
        <end position="340"/>
    </location>
</feature>
<feature type="strand" evidence="28">
    <location>
        <begin position="346"/>
        <end position="353"/>
    </location>
</feature>
<feature type="strand" evidence="28">
    <location>
        <begin position="356"/>
        <end position="363"/>
    </location>
</feature>
<feature type="helix" evidence="28">
    <location>
        <begin position="368"/>
        <end position="370"/>
    </location>
</feature>
<feature type="helix" evidence="28">
    <location>
        <begin position="373"/>
        <end position="376"/>
    </location>
</feature>
<feature type="helix" evidence="28">
    <location>
        <begin position="379"/>
        <end position="381"/>
    </location>
</feature>
<feature type="helix" evidence="28">
    <location>
        <begin position="382"/>
        <end position="390"/>
    </location>
</feature>
<feature type="helix" evidence="28">
    <location>
        <begin position="394"/>
        <end position="396"/>
    </location>
</feature>
<feature type="strand" evidence="28">
    <location>
        <begin position="403"/>
        <end position="408"/>
    </location>
</feature>
<feature type="helix" evidence="28">
    <location>
        <begin position="410"/>
        <end position="412"/>
    </location>
</feature>
<feature type="helix" evidence="28">
    <location>
        <begin position="415"/>
        <end position="418"/>
    </location>
</feature>
<feature type="helix" evidence="28">
    <location>
        <begin position="422"/>
        <end position="430"/>
    </location>
</feature>
<feature type="strand" evidence="28">
    <location>
        <begin position="433"/>
        <end position="436"/>
    </location>
</feature>
<feature type="helix" evidence="28">
    <location>
        <begin position="440"/>
        <end position="442"/>
    </location>
</feature>
<feature type="strand" evidence="28">
    <location>
        <begin position="448"/>
        <end position="451"/>
    </location>
</feature>
<feature type="strand" evidence="28">
    <location>
        <begin position="456"/>
        <end position="461"/>
    </location>
</feature>
<feature type="strand" evidence="28">
    <location>
        <begin position="466"/>
        <end position="468"/>
    </location>
</feature>
<feature type="strand" evidence="28">
    <location>
        <begin position="471"/>
        <end position="473"/>
    </location>
</feature>
<feature type="strand" evidence="28">
    <location>
        <begin position="481"/>
        <end position="490"/>
    </location>
</feature>
<feature type="helix" evidence="28">
    <location>
        <begin position="499"/>
        <end position="505"/>
    </location>
</feature>
<feature type="helix" evidence="28">
    <location>
        <begin position="507"/>
        <end position="509"/>
    </location>
</feature>
<feature type="helix" evidence="28">
    <location>
        <begin position="510"/>
        <end position="518"/>
    </location>
</feature>
<feature type="helix" evidence="28">
    <location>
        <begin position="522"/>
        <end position="526"/>
    </location>
</feature>
<feature type="strand" evidence="27">
    <location>
        <begin position="527"/>
        <end position="529"/>
    </location>
</feature>
<feature type="strand" evidence="28">
    <location>
        <begin position="531"/>
        <end position="536"/>
    </location>
</feature>
<feature type="helix" evidence="28">
    <location>
        <begin position="538"/>
        <end position="542"/>
    </location>
</feature>
<feature type="turn" evidence="28">
    <location>
        <begin position="543"/>
        <end position="546"/>
    </location>
</feature>
<feature type="helix" evidence="28">
    <location>
        <begin position="547"/>
        <end position="553"/>
    </location>
</feature>
<feature type="helix" evidence="28">
    <location>
        <begin position="558"/>
        <end position="564"/>
    </location>
</feature>
<feature type="strand" evidence="28">
    <location>
        <begin position="567"/>
        <end position="570"/>
    </location>
</feature>
<feature type="helix" evidence="28">
    <location>
        <begin position="574"/>
        <end position="576"/>
    </location>
</feature>
<feature type="strand" evidence="28">
    <location>
        <begin position="582"/>
        <end position="586"/>
    </location>
</feature>
<feature type="strand" evidence="28">
    <location>
        <begin position="590"/>
        <end position="598"/>
    </location>
</feature>
<feature type="strand" evidence="28">
    <location>
        <begin position="601"/>
        <end position="606"/>
    </location>
</feature>
<feature type="strand" evidence="28">
    <location>
        <begin position="614"/>
        <end position="616"/>
    </location>
</feature>
<feature type="strand" evidence="28">
    <location>
        <begin position="619"/>
        <end position="626"/>
    </location>
</feature>
<sequence>MIPFLPMFSLLLLLIVNPINANNHYDKILAHSRIRGRDQGPNVCALQQILGTKKKYFSTCKNWYKKSICGQKTTVLYECCPGYMRMEGMKGCPAVLPIDHVYGTLGIVGATTTQRYSDASKLREEIEGKGSFTYFAPSNEAWDNLDSDIRRGLESNVNVELLNALHSHMINKRMLTKDLKNGMIIPSMYNNLGLFINHYPNGVVTVNCARIIHGNQIATNGVVHVIDRVLTQIGTSIQDFIEAEDDLSSFRAAAITSDILEALGRDGHFTLFAPTNEAFEKLPRGVLERIMGDKVASEALMKYHILNTLQCSESIMGGAVFETLEGNTIEIGCDGDSITVNGIKMVNKKDIVTNNGVIHLIDQVLIPDSAKQVIELAGKQQTTFTDLVAQLGLASALRPDGEYTLLAPVNNAFSDDTLSMDQRLLKLILQNHILKVKVGLNELYNGQILETIGGKQLRVFVYRTAVCIENSCMEKGSKQGRNGAIHIFREIIKPAEKSLHEKLKQDKRFSTFLSLLEAADLKELLTQPGDWTLFVPTNDAFKGMTSEEKEILIRDKNALQNIILYHLTPGVFIGKGFEPGVTNILKTTQGSKIFLKEVNDTLLVNELKSKESDIMTTNGVIHVVDKLLYPADTPVGNDQLLEILNKLIKYIQIKFVRGSTFKEIPVTVYTTKIITKVVEPKIKVIEGSLQPIIKTEGPTLTKVKIEGEPEFRLIKEGETITEVIHGEPIIKKYTKIIDGVPVEITEKETREERIITGPEIKYTRISTGGGETEETLKKLLQEEVTKVTKFIEGGDGHLFEDEEIKRLLQGDTPVRKLQANKKVQGSRRRLREGRSQ</sequence>
<keyword id="KW-0002">3D-structure</keyword>
<keyword id="KW-0025">Alternative splicing</keyword>
<keyword id="KW-0130">Cell adhesion</keyword>
<keyword id="KW-1015">Disulfide bond</keyword>
<keyword id="KW-0272">Extracellular matrix</keyword>
<keyword id="KW-0301">Gamma-carboxyglutamic acid</keyword>
<keyword id="KW-0325">Glycoprotein</keyword>
<keyword id="KW-0333">Golgi apparatus</keyword>
<keyword id="KW-0358">Heparin-binding</keyword>
<keyword id="KW-1267">Proteomics identification</keyword>
<keyword id="KW-1185">Reference proteome</keyword>
<keyword id="KW-0677">Repeat</keyword>
<keyword id="KW-0964">Secreted</keyword>
<keyword id="KW-0732">Signal</keyword>
<accession>Q15063</accession>
<accession>B1ALD8</accession>
<accession>B1ALD9</accession>
<accession>C0IMJ1</accession>
<accession>C0IMJ2</accession>
<accession>C0IMJ4</accession>
<accession>D2KRH7</accession>
<accession>F5H628</accession>
<accession>Q15064</accession>
<accession>Q29XZ0</accession>
<accession>Q3KPJ5</accession>
<accession>Q5VSY5</accession>
<accession>Q8IZF9</accession>
<organism>
    <name type="scientific">Homo sapiens</name>
    <name type="common">Human</name>
    <dbReference type="NCBI Taxonomy" id="9606"/>
    <lineage>
        <taxon>Eukaryota</taxon>
        <taxon>Metazoa</taxon>
        <taxon>Chordata</taxon>
        <taxon>Craniata</taxon>
        <taxon>Vertebrata</taxon>
        <taxon>Euteleostomi</taxon>
        <taxon>Mammalia</taxon>
        <taxon>Eutheria</taxon>
        <taxon>Euarchontoglires</taxon>
        <taxon>Primates</taxon>
        <taxon>Haplorrhini</taxon>
        <taxon>Catarrhini</taxon>
        <taxon>Hominidae</taxon>
        <taxon>Homo</taxon>
    </lineage>
</organism>
<gene>
    <name type="primary">POSTN</name>
    <name type="synonym">OSF2</name>
</gene>
<evidence type="ECO:0000250" key="1">
    <source>
        <dbReference type="UniProtKB" id="Q62009"/>
    </source>
</evidence>
<evidence type="ECO:0000255" key="2"/>
<evidence type="ECO:0000255" key="3">
    <source>
        <dbReference type="PROSITE-ProRule" id="PRU00082"/>
    </source>
</evidence>
<evidence type="ECO:0000255" key="4">
    <source>
        <dbReference type="PROSITE-ProRule" id="PRU00384"/>
    </source>
</evidence>
<evidence type="ECO:0000269" key="5">
    <source>
    </source>
</evidence>
<evidence type="ECO:0000269" key="6">
    <source>
    </source>
</evidence>
<evidence type="ECO:0000269" key="7">
    <source>
    </source>
</evidence>
<evidence type="ECO:0000269" key="8">
    <source>
    </source>
</evidence>
<evidence type="ECO:0000269" key="9">
    <source>
    </source>
</evidence>
<evidence type="ECO:0000269" key="10">
    <source>
    </source>
</evidence>
<evidence type="ECO:0000269" key="11">
    <source>
    </source>
</evidence>
<evidence type="ECO:0000269" key="12">
    <source>
    </source>
</evidence>
<evidence type="ECO:0000269" key="13">
    <source>
    </source>
</evidence>
<evidence type="ECO:0000269" key="14">
    <source>
    </source>
</evidence>
<evidence type="ECO:0000269" key="15">
    <source>
    </source>
</evidence>
<evidence type="ECO:0000269" key="16">
    <source>
    </source>
</evidence>
<evidence type="ECO:0000303" key="17">
    <source>
    </source>
</evidence>
<evidence type="ECO:0000303" key="18">
    <source>
    </source>
</evidence>
<evidence type="ECO:0000303" key="19">
    <source>
    </source>
</evidence>
<evidence type="ECO:0000303" key="20">
    <source>
    </source>
</evidence>
<evidence type="ECO:0000303" key="21">
    <source ref="4"/>
</evidence>
<evidence type="ECO:0000303" key="22">
    <source ref="8"/>
</evidence>
<evidence type="ECO:0000305" key="23"/>
<evidence type="ECO:0007744" key="24">
    <source>
        <dbReference type="PDB" id="5WT7"/>
    </source>
</evidence>
<evidence type="ECO:0007744" key="25">
    <source>
        <dbReference type="PDB" id="5YJG"/>
    </source>
</evidence>
<evidence type="ECO:0007744" key="26">
    <source>
        <dbReference type="PDB" id="5YJH"/>
    </source>
</evidence>
<evidence type="ECO:0007829" key="27">
    <source>
        <dbReference type="PDB" id="5WT7"/>
    </source>
</evidence>
<evidence type="ECO:0007829" key="28">
    <source>
        <dbReference type="PDB" id="5YJG"/>
    </source>
</evidence>
<protein>
    <recommendedName>
        <fullName>Periostin</fullName>
        <shortName>PN</shortName>
    </recommendedName>
    <alternativeName>
        <fullName>Osteoblast-specific factor 2</fullName>
        <shortName>OSF-2</shortName>
    </alternativeName>
</protein>
<reference evidence="23" key="1">
    <citation type="journal article" date="1993" name="Biochem. J.">
        <title>Osteoblast-specific factor 2: cloning of a putative bone adhesion protein with homology with the insect protein fasciclin I.</title>
        <authorList>
            <person name="Takeshita S."/>
            <person name="Kikuno R."/>
            <person name="Tezuka K."/>
            <person name="Amann E."/>
        </authorList>
    </citation>
    <scope>NUCLEOTIDE SEQUENCE [MRNA] (ISOFORMS 1 AND 2)</scope>
    <source>
        <tissue evidence="16">Osteosarcoma</tissue>
        <tissue evidence="16">Placenta</tissue>
    </source>
</reference>
<reference evidence="23" key="2">
    <citation type="journal article" date="2002" name="Cancer Res.">
        <title>Periostin secreted by epithelial ovarian carcinoma is a ligand for alpha(V)beta(3) and alpha(V)beta(5) integrins and promotes cell motility.</title>
        <authorList>
            <person name="Gillan L."/>
            <person name="Matei D."/>
            <person name="Fishman D.A."/>
            <person name="Gerbin C.S."/>
            <person name="Karlan B.Y."/>
            <person name="Chang D.D."/>
        </authorList>
    </citation>
    <scope>NUCLEOTIDE SEQUENCE [MRNA] (ISOFORM 3)</scope>
    <scope>FUNCTION</scope>
    <scope>SUBCELLULAR LOCATION</scope>
    <scope>TISSUE SPECIFICITY</scope>
</reference>
<reference key="3">
    <citation type="journal article" date="2010" name="Jpn. Clin. Med.">
        <title>Novel isoforms of periostin expressed in the human thyroid.</title>
        <authorList>
            <person name="Bai Y."/>
            <person name="Nakamura M."/>
            <person name="Zhou G."/>
            <person name="Li Y."/>
            <person name="Liu Z."/>
            <person name="Ozaki T."/>
            <person name="Mori I."/>
            <person name="Kakudo K."/>
        </authorList>
    </citation>
    <scope>NUCLEOTIDE SEQUENCE [MRNA] (ISOFORM 5; 6; 7)</scope>
    <scope>ALTERNATIVE SPLICING</scope>
    <scope>TISSUE SPECIFICITY</scope>
</reference>
<reference key="4">
    <citation type="submission" date="2005-02" db="EMBL/GenBank/DDBJ databases">
        <title>Identification and characterization of a novel periodontal ligament-specific periostin isoform.</title>
        <authorList>
            <person name="Yamada S."/>
            <person name="Maeda K."/>
            <person name="Matsubara K."/>
            <person name="Murakami S."/>
        </authorList>
    </citation>
    <scope>NUCLEOTIDE SEQUENCE [MRNA] (ISOFORM 4)</scope>
    <source>
        <tissue>Periodontal ligament</tissue>
    </source>
</reference>
<reference key="5">
    <citation type="journal article" date="2004" name="Nature">
        <title>The DNA sequence and analysis of human chromosome 13.</title>
        <authorList>
            <person name="Dunham A."/>
            <person name="Matthews L.H."/>
            <person name="Burton J."/>
            <person name="Ashurst J.L."/>
            <person name="Howe K.L."/>
            <person name="Ashcroft K.J."/>
            <person name="Beare D.M."/>
            <person name="Burford D.C."/>
            <person name="Hunt S.E."/>
            <person name="Griffiths-Jones S."/>
            <person name="Jones M.C."/>
            <person name="Keenan S.J."/>
            <person name="Oliver K."/>
            <person name="Scott C.E."/>
            <person name="Ainscough R."/>
            <person name="Almeida J.P."/>
            <person name="Ambrose K.D."/>
            <person name="Andrews D.T."/>
            <person name="Ashwell R.I.S."/>
            <person name="Babbage A.K."/>
            <person name="Bagguley C.L."/>
            <person name="Bailey J."/>
            <person name="Bannerjee R."/>
            <person name="Barlow K.F."/>
            <person name="Bates K."/>
            <person name="Beasley H."/>
            <person name="Bird C.P."/>
            <person name="Bray-Allen S."/>
            <person name="Brown A.J."/>
            <person name="Brown J.Y."/>
            <person name="Burrill W."/>
            <person name="Carder C."/>
            <person name="Carter N.P."/>
            <person name="Chapman J.C."/>
            <person name="Clamp M.E."/>
            <person name="Clark S.Y."/>
            <person name="Clarke G."/>
            <person name="Clee C.M."/>
            <person name="Clegg S.C."/>
            <person name="Cobley V."/>
            <person name="Collins J.E."/>
            <person name="Corby N."/>
            <person name="Coville G.J."/>
            <person name="Deloukas P."/>
            <person name="Dhami P."/>
            <person name="Dunham I."/>
            <person name="Dunn M."/>
            <person name="Earthrowl M.E."/>
            <person name="Ellington A.G."/>
            <person name="Faulkner L."/>
            <person name="Frankish A.G."/>
            <person name="Frankland J."/>
            <person name="French L."/>
            <person name="Garner P."/>
            <person name="Garnett J."/>
            <person name="Gilbert J.G.R."/>
            <person name="Gilson C.J."/>
            <person name="Ghori J."/>
            <person name="Grafham D.V."/>
            <person name="Gribble S.M."/>
            <person name="Griffiths C."/>
            <person name="Hall R.E."/>
            <person name="Hammond S."/>
            <person name="Harley J.L."/>
            <person name="Hart E.A."/>
            <person name="Heath P.D."/>
            <person name="Howden P.J."/>
            <person name="Huckle E.J."/>
            <person name="Hunt P.J."/>
            <person name="Hunt A.R."/>
            <person name="Johnson C."/>
            <person name="Johnson D."/>
            <person name="Kay M."/>
            <person name="Kimberley A.M."/>
            <person name="King A."/>
            <person name="Laird G.K."/>
            <person name="Langford C.J."/>
            <person name="Lawlor S."/>
            <person name="Leongamornlert D.A."/>
            <person name="Lloyd D.M."/>
            <person name="Lloyd C."/>
            <person name="Loveland J.E."/>
            <person name="Lovell J."/>
            <person name="Martin S."/>
            <person name="Mashreghi-Mohammadi M."/>
            <person name="McLaren S.J."/>
            <person name="McMurray A."/>
            <person name="Milne S."/>
            <person name="Moore M.J.F."/>
            <person name="Nickerson T."/>
            <person name="Palmer S.A."/>
            <person name="Pearce A.V."/>
            <person name="Peck A.I."/>
            <person name="Pelan S."/>
            <person name="Phillimore B."/>
            <person name="Porter K.M."/>
            <person name="Rice C.M."/>
            <person name="Searle S."/>
            <person name="Sehra H.K."/>
            <person name="Shownkeen R."/>
            <person name="Skuce C.D."/>
            <person name="Smith M."/>
            <person name="Steward C.A."/>
            <person name="Sycamore N."/>
            <person name="Tester J."/>
            <person name="Thomas D.W."/>
            <person name="Tracey A."/>
            <person name="Tromans A."/>
            <person name="Tubby B."/>
            <person name="Wall M."/>
            <person name="Wallis J.M."/>
            <person name="West A.P."/>
            <person name="Whitehead S.L."/>
            <person name="Willey D.L."/>
            <person name="Wilming L."/>
            <person name="Wray P.W."/>
            <person name="Wright M.W."/>
            <person name="Young L."/>
            <person name="Coulson A."/>
            <person name="Durbin R.M."/>
            <person name="Hubbard T."/>
            <person name="Sulston J.E."/>
            <person name="Beck S."/>
            <person name="Bentley D.R."/>
            <person name="Rogers J."/>
            <person name="Ross M.T."/>
        </authorList>
    </citation>
    <scope>NUCLEOTIDE SEQUENCE [LARGE SCALE GENOMIC DNA]</scope>
</reference>
<reference key="6">
    <citation type="submission" date="2005-07" db="EMBL/GenBank/DDBJ databases">
        <authorList>
            <person name="Mural R.J."/>
            <person name="Istrail S."/>
            <person name="Sutton G.G."/>
            <person name="Florea L."/>
            <person name="Halpern A.L."/>
            <person name="Mobarry C.M."/>
            <person name="Lippert R."/>
            <person name="Walenz B."/>
            <person name="Shatkay H."/>
            <person name="Dew I."/>
            <person name="Miller J.R."/>
            <person name="Flanigan M.J."/>
            <person name="Edwards N.J."/>
            <person name="Bolanos R."/>
            <person name="Fasulo D."/>
            <person name="Halldorsson B.V."/>
            <person name="Hannenhalli S."/>
            <person name="Turner R."/>
            <person name="Yooseph S."/>
            <person name="Lu F."/>
            <person name="Nusskern D.R."/>
            <person name="Shue B.C."/>
            <person name="Zheng X.H."/>
            <person name="Zhong F."/>
            <person name="Delcher A.L."/>
            <person name="Huson D.H."/>
            <person name="Kravitz S.A."/>
            <person name="Mouchard L."/>
            <person name="Reinert K."/>
            <person name="Remington K.A."/>
            <person name="Clark A.G."/>
            <person name="Waterman M.S."/>
            <person name="Eichler E.E."/>
            <person name="Adams M.D."/>
            <person name="Hunkapiller M.W."/>
            <person name="Myers E.W."/>
            <person name="Venter J.C."/>
        </authorList>
    </citation>
    <scope>NUCLEOTIDE SEQUENCE [LARGE SCALE GENOMIC DNA]</scope>
</reference>
<reference key="7">
    <citation type="journal article" date="2004" name="Genome Res.">
        <title>The status, quality, and expansion of the NIH full-length cDNA project: the Mammalian Gene Collection (MGC).</title>
        <authorList>
            <consortium name="The MGC Project Team"/>
        </authorList>
    </citation>
    <scope>NUCLEOTIDE SEQUENCE [LARGE SCALE MRNA] (ISOFORM 2)</scope>
</reference>
<reference key="8">
    <citation type="submission" date="2009-11" db="EMBL/GenBank/DDBJ databases">
        <title>OSF-2 expression in head and neck squamous cell carcinomas.</title>
        <authorList>
            <person name="Habtemichael N."/>
            <person name="Schweitzer A."/>
            <person name="Knauer S."/>
            <person name="Stauber R.H."/>
        </authorList>
    </citation>
    <scope>NUCLEOTIDE SEQUENCE [MRNA] OF 1-798 (ISOFORM 5)</scope>
</reference>
<reference key="9">
    <citation type="journal article" date="2011" name="Am. J. Pathol.">
        <title>Relevance of periostin splice variants in renal cell carcinoma.</title>
        <authorList>
            <person name="Morra L."/>
            <person name="Rechsteiner M."/>
            <person name="Casagrande S."/>
            <person name="Duc Luu V."/>
            <person name="Santimaria R."/>
            <person name="Diener P.A."/>
            <person name="Sulser T."/>
            <person name="Kristiansen G."/>
            <person name="Schraml P."/>
            <person name="Moch H."/>
            <person name="Soltermann A."/>
        </authorList>
    </citation>
    <scope>NUCLEOTIDE SEQUENCE [MRNA] OF 629-836 (ISOFORMS 6; 7; 8 AND 9)</scope>
    <scope>TISSUE SPECIFICITY</scope>
    <scope>ALTERNATIVE SPLICING</scope>
</reference>
<reference evidence="23" key="10">
    <citation type="journal article" date="2001" name="Cancer">
        <title>Serum level of the periostin, a homologue of an insect cell adhesion molecule, as a prognostic marker in nonsmall cell lung carcinomas.</title>
        <authorList>
            <person name="Sasaki H."/>
            <person name="Dai M."/>
            <person name="Auclair D."/>
            <person name="Fukai I."/>
            <person name="Kiriyama M."/>
            <person name="Yamakawa Y."/>
            <person name="Fujii Y."/>
            <person name="Chen L.B."/>
        </authorList>
    </citation>
    <scope>TISSUE SPECIFICITY</scope>
</reference>
<reference key="11">
    <citation type="journal article" date="2002" name="Cancer">
        <authorList>
            <person name="Sasaki H."/>
            <person name="Dai M."/>
            <person name="Auclair D."/>
            <person name="Fukai I."/>
            <person name="Kiriyama M."/>
            <person name="Yamakawa Y."/>
            <person name="Fujii Y."/>
            <person name="Chen L.B."/>
        </authorList>
    </citation>
    <scope>ERRATUM OF PUBMED:11550156</scope>
</reference>
<reference key="12">
    <citation type="journal article" date="2004" name="Mol. Cell. Biol.">
        <title>Acquired expression of periostin by human breast cancers promotes tumor angiogenesis through up-regulation of vascular endothelial growth factor receptor 2 expression.</title>
        <authorList>
            <person name="Shao R."/>
            <person name="Bao S."/>
            <person name="Bai X."/>
            <person name="Blanchette C."/>
            <person name="Anderson R.M."/>
            <person name="Dang T."/>
            <person name="Gishizky M.L."/>
            <person name="Marks J.R."/>
            <person name="Wang X.-F."/>
        </authorList>
    </citation>
    <scope>TISSUE SPECIFICITY</scope>
</reference>
<reference key="13">
    <citation type="journal article" date="2005" name="J. Proteome Res.">
        <title>Human plasma N-glycoproteome analysis by immunoaffinity subtraction, hydrazide chemistry, and mass spectrometry.</title>
        <authorList>
            <person name="Liu T."/>
            <person name="Qian W.-J."/>
            <person name="Gritsenko M.A."/>
            <person name="Camp D.G. II"/>
            <person name="Monroe M.E."/>
            <person name="Moore R.J."/>
            <person name="Smith R.D."/>
        </authorList>
    </citation>
    <scope>GLYCOSYLATION [LARGE SCALE ANALYSIS] AT ASN-599</scope>
    <source>
        <tissue>Plasma</tissue>
    </source>
</reference>
<reference key="14">
    <citation type="journal article" date="2008" name="J. Biol. Chem.">
        <title>Periostin, a member of a novel family of vitamin K-dependent proteins, is expressed by mesenchymal stromal cells.</title>
        <authorList>
            <person name="Coutu D.L."/>
            <person name="Wu J.H."/>
            <person name="Monette A."/>
            <person name="Rivard G.-E."/>
            <person name="Blostein M.D."/>
            <person name="Galipeau J."/>
        </authorList>
    </citation>
    <scope>SUBCELLULAR LOCATION</scope>
    <scope>GAMMA-CARBOXYGLUTAMATION</scope>
</reference>
<reference key="15">
    <citation type="journal article" date="2009" name="J. Proteome Res.">
        <title>Glycoproteomics analysis of human liver tissue by combination of multiple enzyme digestion and hydrazide chemistry.</title>
        <authorList>
            <person name="Chen R."/>
            <person name="Jiang X."/>
            <person name="Sun D."/>
            <person name="Han G."/>
            <person name="Wang F."/>
            <person name="Ye M."/>
            <person name="Wang L."/>
            <person name="Zou H."/>
        </authorList>
    </citation>
    <scope>GLYCOSYLATION [LARGE SCALE ANALYSIS] AT ASN-599</scope>
    <source>
        <tissue>Liver</tissue>
    </source>
</reference>
<reference key="16">
    <citation type="journal article" date="2012" name="Lung Cancer">
        <title>Characterization of periostin isoform pattern in non-small cell lung cancer.</title>
        <authorList>
            <person name="Morra L."/>
            <person name="Rechsteiner M."/>
            <person name="Casagrande S."/>
            <person name="von Teichman A."/>
            <person name="Schraml P."/>
            <person name="Moch H."/>
            <person name="Soltermann A."/>
        </authorList>
    </citation>
    <scope>ALTERNATIVE SPLICING</scope>
    <scope>TISSUE SPECIFICITY</scope>
</reference>
<reference key="17">
    <citation type="journal article" date="2014" name="J. Proteomics">
        <title>An enzyme assisted RP-RPLC approach for in-depth analysis of human liver phosphoproteome.</title>
        <authorList>
            <person name="Bian Y."/>
            <person name="Song C."/>
            <person name="Cheng K."/>
            <person name="Dong M."/>
            <person name="Wang F."/>
            <person name="Huang J."/>
            <person name="Sun D."/>
            <person name="Wang L."/>
            <person name="Ye M."/>
            <person name="Zou H."/>
        </authorList>
    </citation>
    <scope>IDENTIFICATION BY MASS SPECTROMETRY [LARGE SCALE ANALYSIS]</scope>
    <source>
        <tissue>Liver</tissue>
    </source>
</reference>
<reference key="18">
    <citation type="journal article" date="2015" name="PLoS ONE">
        <title>Absence of vitamin K-dependent gamma-carboxylation in human periostin extracted from fibrotic lung or secreted from a cell line engineered to optimize gamma-carboxylation.</title>
        <authorList>
            <person name="Annis D.S."/>
            <person name="Ma H."/>
            <person name="Balas D.M."/>
            <person name="Kumfer K.T."/>
            <person name="Sandbo N."/>
            <person name="Potts G.K."/>
            <person name="Coon J.J."/>
            <person name="Mosher D.F."/>
        </authorList>
    </citation>
    <scope>SUBCELLULAR LOCATION</scope>
    <scope>LACK OF GAMMA-CARBOXYGLUTAMATION</scope>
</reference>
<reference evidence="24" key="19">
    <citation type="journal article" date="2018" name="Biomol. NMR. Assign.">
        <title>1H, 13C, and 15N resonance assignments of FAS1-IV domain of human periostin, a component of extracellular matrix proteins.</title>
        <authorList>
            <person name="Yun H."/>
            <person name="Kim E.H."/>
            <person name="Lee C.W."/>
        </authorList>
    </citation>
    <scope>STRUCTURE BY NMR OF 496-632</scope>
</reference>
<reference evidence="25 26" key="20">
    <citation type="journal article" date="2018" name="FEBS Lett.">
        <title>Structural characterizations of human periostin dimerization and cysteinylation.</title>
        <authorList>
            <person name="Liu J."/>
            <person name="Zhang J."/>
            <person name="Xu F."/>
            <person name="Lin Z."/>
            <person name="Li Z."/>
            <person name="Liu H."/>
        </authorList>
    </citation>
    <scope>X-RAY CRYSTALLOGRAPHY (2.40 ANGSTROMS) OF 22-631</scope>
    <scope>SUBUNIT</scope>
    <scope>DISULFIDE BONDS</scope>
    <scope>CYSTEINYLATION AT CYS-60</scope>
    <scope>MUTAGENESIS OF CYS-60 AND 463-ARG--ALA-465</scope>
</reference>
<comment type="function">
    <text evidence="1 6">Induces cell attachment and spreading and plays a role in cell adhesion (PubMed:12235007). Enhances incorporation of BMP1 in the fibronectin matrix of connective tissues, and subsequent proteolytic activation of lysyl oxidase LOX (By similarity).</text>
</comment>
<comment type="subunit">
    <text evidence="1 15">Homodimer (PubMed:29754429). Interacts with BMP1 and fibronectin.</text>
</comment>
<comment type="interaction">
    <interactant intactId="EBI-7067070">
        <id>Q15063</id>
    </interactant>
    <interactant intactId="EBI-10236573">
        <id>Q15582</id>
        <label>TGFBI</label>
    </interactant>
    <organismsDiffer>false</organismsDiffer>
    <experiments>7</experiments>
</comment>
<comment type="subcellular location">
    <subcellularLocation>
        <location evidence="1">Golgi apparatus</location>
    </subcellularLocation>
    <subcellularLocation>
        <location evidence="9 14">Secreted</location>
    </subcellularLocation>
    <subcellularLocation>
        <location evidence="6 9">Secreted</location>
        <location evidence="6 9">Extracellular space</location>
        <location evidence="6 9">Extracellular matrix</location>
    </subcellularLocation>
    <text evidence="1">Colocalizes with BMP1 in the Golgi.</text>
</comment>
<comment type="alternative products">
    <event type="alternative splicing"/>
    <isoform>
        <id>Q15063-1</id>
        <name evidence="16">1</name>
        <name evidence="20">OSF-2OS</name>
        <sequence type="displayed"/>
    </isoform>
    <isoform>
        <id>Q15063-2</id>
        <name evidence="16">2</name>
        <name>OSF-2p1</name>
        <sequence type="described" ref="VSP_050005"/>
    </isoform>
    <isoform>
        <id>Q15063-3</id>
        <name evidence="6">3</name>
        <sequence type="described" ref="VSP_050669 VSP_050670"/>
    </isoform>
    <isoform>
        <id>Q15063-4</id>
        <name>4</name>
        <sequence type="described" ref="VSP_050005 VSP_050670"/>
    </isoform>
    <isoform>
        <id>Q15063-5</id>
        <name>5</name>
        <sequence type="described" ref="VSP_050669"/>
    </isoform>
    <isoform>
        <id>Q15063-6</id>
        <name>6</name>
        <sequence type="described" ref="VSP_055183"/>
    </isoform>
    <isoform>
        <id>Q15063-7</id>
        <name>7</name>
        <sequence type="described" ref="VSP_055183 VSP_050670"/>
    </isoform>
    <isoform>
        <id>Q15063-8</id>
        <name>8</name>
        <sequence type="described" ref="VSP_050670"/>
    </isoform>
    <isoform>
        <id>Q15063-9</id>
        <name>9</name>
        <sequence type="described" ref="VSP_062248"/>
    </isoform>
    <isoform>
        <id>Q15063-10</id>
        <name>10</name>
        <sequence type="described" ref="VSP_062248 VSP_050670"/>
    </isoform>
</comment>
<comment type="tissue specificity">
    <text evidence="5 6 7 11 12 13">Widely expressed with highest levels in aorta, stomach, lower gastrointestinal tract, placenta, uterus, thyroid tissue and breast. Expressed in the kidney (PubMed:21763681). Expressed in the lung (PubMed:22079858). Up-regulated in epithelial ovarian tumors. Not expressed in normal ovaries. Also highly expressed at the tumor periphery of lung carcinoma tissue but not within the tumor. Overexpressed in breast cancers.</text>
</comment>
<comment type="PTM">
    <text evidence="9 14">Gamma-carboxylation is controversial. Gamma-carboxyglutamated; gamma-carboxyglutamate residues are formed by vitamin K dependent carboxylation; this may be required for calcium binding (PubMed:18450759). According to a more recent report, does not contain vitamin K-dependent gamma-carboxyglutamate residues (PubMed:26273833).</text>
</comment>
<proteinExistence type="evidence at protein level"/>
<name>POSTN_HUMAN</name>
<dbReference type="EMBL" id="D13665">
    <property type="protein sequence ID" value="BAA02836.1"/>
    <property type="molecule type" value="mRNA"/>
</dbReference>
<dbReference type="EMBL" id="D13666">
    <property type="protein sequence ID" value="BAA02837.1"/>
    <property type="molecule type" value="mRNA"/>
</dbReference>
<dbReference type="EMBL" id="AY140646">
    <property type="protein sequence ID" value="AAN17733.1"/>
    <property type="molecule type" value="mRNA"/>
</dbReference>
<dbReference type="EMBL" id="EU262883">
    <property type="protein sequence ID" value="ABY86630.1"/>
    <property type="molecule type" value="mRNA"/>
</dbReference>
<dbReference type="EMBL" id="EU262884">
    <property type="protein sequence ID" value="ABY86631.1"/>
    <property type="molecule type" value="mRNA"/>
</dbReference>
<dbReference type="EMBL" id="EU262886">
    <property type="protein sequence ID" value="ABY86633.1"/>
    <property type="molecule type" value="mRNA"/>
</dbReference>
<dbReference type="EMBL" id="AY918092">
    <property type="protein sequence ID" value="AAY15840.1"/>
    <property type="molecule type" value="mRNA"/>
</dbReference>
<dbReference type="EMBL" id="AL138679">
    <property type="status" value="NOT_ANNOTATED_CDS"/>
    <property type="molecule type" value="Genomic_DNA"/>
</dbReference>
<dbReference type="EMBL" id="AL646087">
    <property type="status" value="NOT_ANNOTATED_CDS"/>
    <property type="molecule type" value="Genomic_DNA"/>
</dbReference>
<dbReference type="EMBL" id="CH471075">
    <property type="protein sequence ID" value="EAX08590.1"/>
    <property type="molecule type" value="Genomic_DNA"/>
</dbReference>
<dbReference type="EMBL" id="BC106709">
    <property type="protein sequence ID" value="AAI06710.1"/>
    <property type="molecule type" value="mRNA"/>
</dbReference>
<dbReference type="EMBL" id="BC106710">
    <property type="protein sequence ID" value="AAI06711.1"/>
    <property type="molecule type" value="mRNA"/>
</dbReference>
<dbReference type="EMBL" id="GU354210">
    <property type="protein sequence ID" value="ADA79517.1"/>
    <property type="molecule type" value="mRNA"/>
</dbReference>
<dbReference type="EMBL" id="JG969042">
    <property type="status" value="NOT_ANNOTATED_CDS"/>
    <property type="molecule type" value="mRNA"/>
</dbReference>
<dbReference type="EMBL" id="JG969043">
    <property type="status" value="NOT_ANNOTATED_CDS"/>
    <property type="molecule type" value="mRNA"/>
</dbReference>
<dbReference type="EMBL" id="JG969044">
    <property type="status" value="NOT_ANNOTATED_CDS"/>
    <property type="molecule type" value="mRNA"/>
</dbReference>
<dbReference type="EMBL" id="JG969045">
    <property type="status" value="NOT_ANNOTATED_CDS"/>
    <property type="molecule type" value="mRNA"/>
</dbReference>
<dbReference type="CCDS" id="CCDS45034.1">
    <molecule id="Q15063-2"/>
</dbReference>
<dbReference type="CCDS" id="CCDS53864.1">
    <molecule id="Q15063-3"/>
</dbReference>
<dbReference type="CCDS" id="CCDS66530.1">
    <molecule id="Q15063-6"/>
</dbReference>
<dbReference type="CCDS" id="CCDS66531.1">
    <molecule id="Q15063-5"/>
</dbReference>
<dbReference type="CCDS" id="CCDS81764.1">
    <molecule id="Q15063-8"/>
</dbReference>
<dbReference type="CCDS" id="CCDS9364.1">
    <molecule id="Q15063-1"/>
</dbReference>
<dbReference type="PIR" id="S36110">
    <property type="entry name" value="S36110"/>
</dbReference>
<dbReference type="PIR" id="S36111">
    <property type="entry name" value="S36111"/>
</dbReference>
<dbReference type="RefSeq" id="NP_001129406.1">
    <molecule id="Q15063-2"/>
    <property type="nucleotide sequence ID" value="NM_001135934.2"/>
</dbReference>
<dbReference type="RefSeq" id="NP_001129407.1">
    <molecule id="Q15063-3"/>
    <property type="nucleotide sequence ID" value="NM_001135935.2"/>
</dbReference>
<dbReference type="RefSeq" id="NP_001129408.1">
    <molecule id="Q15063-4"/>
    <property type="nucleotide sequence ID" value="NM_001135936.2"/>
</dbReference>
<dbReference type="RefSeq" id="NP_001273594.1">
    <molecule id="Q15063-5"/>
    <property type="nucleotide sequence ID" value="NM_001286665.2"/>
</dbReference>
<dbReference type="RefSeq" id="NP_001273595.1">
    <molecule id="Q15063-6"/>
    <property type="nucleotide sequence ID" value="NM_001286666.2"/>
</dbReference>
<dbReference type="RefSeq" id="NP_001273596.1">
    <molecule id="Q15063-7"/>
    <property type="nucleotide sequence ID" value="NM_001286667.2"/>
</dbReference>
<dbReference type="RefSeq" id="NP_001317446.1">
    <molecule id="Q15063-8"/>
    <property type="nucleotide sequence ID" value="NM_001330517.2"/>
</dbReference>
<dbReference type="RefSeq" id="NP_001411101.1">
    <molecule id="Q15063-9"/>
    <property type="nucleotide sequence ID" value="NM_001424172.1"/>
</dbReference>
<dbReference type="RefSeq" id="NP_001411102.1">
    <molecule id="Q15063-10"/>
    <property type="nucleotide sequence ID" value="NM_001424173.1"/>
</dbReference>
<dbReference type="RefSeq" id="NP_006466.2">
    <molecule id="Q15063-1"/>
    <property type="nucleotide sequence ID" value="NM_006475.3"/>
</dbReference>
<dbReference type="RefSeq" id="XP_005266289.1">
    <property type="nucleotide sequence ID" value="XM_005266232.2"/>
</dbReference>
<dbReference type="PDB" id="5WT7">
    <property type="method" value="NMR"/>
    <property type="chains" value="A=496-632"/>
</dbReference>
<dbReference type="PDB" id="5YJG">
    <property type="method" value="X-ray"/>
    <property type="resolution" value="2.40 A"/>
    <property type="chains" value="A=22-631"/>
</dbReference>
<dbReference type="PDB" id="5YJH">
    <property type="method" value="X-ray"/>
    <property type="resolution" value="2.96 A"/>
    <property type="chains" value="A=17-631"/>
</dbReference>
<dbReference type="PDBsum" id="5WT7"/>
<dbReference type="PDBsum" id="5YJG"/>
<dbReference type="PDBsum" id="5YJH"/>
<dbReference type="SMR" id="Q15063"/>
<dbReference type="BioGRID" id="115875">
    <property type="interactions" value="9"/>
</dbReference>
<dbReference type="FunCoup" id="Q15063">
    <property type="interactions" value="63"/>
</dbReference>
<dbReference type="IntAct" id="Q15063">
    <property type="interactions" value="5"/>
</dbReference>
<dbReference type="MINT" id="Q15063"/>
<dbReference type="STRING" id="9606.ENSP00000369071"/>
<dbReference type="GlyConnect" id="1599">
    <property type="glycosylation" value="66 N-Linked glycans (1 site)"/>
</dbReference>
<dbReference type="GlyCosmos" id="Q15063">
    <property type="glycosylation" value="2 sites, 63 glycans"/>
</dbReference>
<dbReference type="GlyGen" id="Q15063">
    <property type="glycosylation" value="3 sites, 156 N-linked glycans (1 site), 3 O-linked glycans (2 sites)"/>
</dbReference>
<dbReference type="iPTMnet" id="Q15063"/>
<dbReference type="PhosphoSitePlus" id="Q15063"/>
<dbReference type="SwissPalm" id="Q15063"/>
<dbReference type="BioMuta" id="POSTN"/>
<dbReference type="DMDM" id="93138709"/>
<dbReference type="jPOST" id="Q15063"/>
<dbReference type="MassIVE" id="Q15063"/>
<dbReference type="PaxDb" id="9606-ENSP00000369071"/>
<dbReference type="PeptideAtlas" id="Q15063"/>
<dbReference type="ProteomicsDB" id="27060"/>
<dbReference type="ProteomicsDB" id="3153"/>
<dbReference type="ProteomicsDB" id="3154"/>
<dbReference type="ProteomicsDB" id="60417">
    <molecule id="Q15063-1"/>
</dbReference>
<dbReference type="ProteomicsDB" id="60418">
    <molecule id="Q15063-2"/>
</dbReference>
<dbReference type="ProteomicsDB" id="60419">
    <molecule id="Q15063-3"/>
</dbReference>
<dbReference type="ProteomicsDB" id="60420">
    <molecule id="Q15063-4"/>
</dbReference>
<dbReference type="ABCD" id="Q15063">
    <property type="antibodies" value="4 sequenced antibodies"/>
</dbReference>
<dbReference type="Antibodypedia" id="2020">
    <property type="antibodies" value="727 antibodies from 46 providers"/>
</dbReference>
<dbReference type="DNASU" id="10631"/>
<dbReference type="Ensembl" id="ENST00000379742.4">
    <molecule id="Q15063-2"/>
    <property type="protein sequence ID" value="ENSP00000369066.4"/>
    <property type="gene ID" value="ENSG00000133110.15"/>
</dbReference>
<dbReference type="Ensembl" id="ENST00000379743.8">
    <molecule id="Q15063-5"/>
    <property type="protein sequence ID" value="ENSP00000369067.4"/>
    <property type="gene ID" value="ENSG00000133110.15"/>
</dbReference>
<dbReference type="Ensembl" id="ENST00000379747.9">
    <molecule id="Q15063-1"/>
    <property type="protein sequence ID" value="ENSP00000369071.4"/>
    <property type="gene ID" value="ENSG00000133110.15"/>
</dbReference>
<dbReference type="Ensembl" id="ENST00000379749.8">
    <molecule id="Q15063-8"/>
    <property type="protein sequence ID" value="ENSP00000369073.4"/>
    <property type="gene ID" value="ENSG00000133110.15"/>
</dbReference>
<dbReference type="Ensembl" id="ENST00000541179.5">
    <molecule id="Q15063-3"/>
    <property type="protein sequence ID" value="ENSP00000437959.1"/>
    <property type="gene ID" value="ENSG00000133110.15"/>
</dbReference>
<dbReference type="Ensembl" id="ENST00000541481.5">
    <molecule id="Q15063-6"/>
    <property type="protein sequence ID" value="ENSP00000437953.1"/>
    <property type="gene ID" value="ENSG00000133110.15"/>
</dbReference>
<dbReference type="GeneID" id="10631"/>
<dbReference type="KEGG" id="hsa:10631"/>
<dbReference type="MANE-Select" id="ENST00000379747.9">
    <property type="protein sequence ID" value="ENSP00000369071.4"/>
    <property type="RefSeq nucleotide sequence ID" value="NM_006475.3"/>
    <property type="RefSeq protein sequence ID" value="NP_006466.2"/>
</dbReference>
<dbReference type="UCSC" id="uc001uwo.5">
    <molecule id="Q15063-1"/>
    <property type="organism name" value="human"/>
</dbReference>
<dbReference type="AGR" id="HGNC:16953"/>
<dbReference type="CTD" id="10631"/>
<dbReference type="DisGeNET" id="10631"/>
<dbReference type="GeneCards" id="POSTN"/>
<dbReference type="HGNC" id="HGNC:16953">
    <property type="gene designation" value="POSTN"/>
</dbReference>
<dbReference type="HPA" id="ENSG00000133110">
    <property type="expression patterns" value="Tissue enhanced (skin, stomach)"/>
</dbReference>
<dbReference type="MIM" id="608777">
    <property type="type" value="gene"/>
</dbReference>
<dbReference type="neXtProt" id="NX_Q15063"/>
<dbReference type="OpenTargets" id="ENSG00000133110"/>
<dbReference type="PharmGKB" id="PA134900304"/>
<dbReference type="VEuPathDB" id="HostDB:ENSG00000133110"/>
<dbReference type="eggNOG" id="KOG1437">
    <property type="taxonomic scope" value="Eukaryota"/>
</dbReference>
<dbReference type="GeneTree" id="ENSGT00530000063860"/>
<dbReference type="HOGENOM" id="CLU_017611_0_0_1"/>
<dbReference type="InParanoid" id="Q15063"/>
<dbReference type="OMA" id="QWLSYHI"/>
<dbReference type="OrthoDB" id="7700931at2759"/>
<dbReference type="PAN-GO" id="Q15063">
    <property type="GO annotations" value="5 GO annotations based on evolutionary models"/>
</dbReference>
<dbReference type="PhylomeDB" id="Q15063"/>
<dbReference type="TreeFam" id="TF316269"/>
<dbReference type="PathwayCommons" id="Q15063"/>
<dbReference type="SignaLink" id="Q15063"/>
<dbReference type="SIGNOR" id="Q15063"/>
<dbReference type="BioGRID-ORCS" id="10631">
    <property type="hits" value="14 hits in 1153 CRISPR screens"/>
</dbReference>
<dbReference type="ChiTaRS" id="POSTN">
    <property type="organism name" value="human"/>
</dbReference>
<dbReference type="GeneWiki" id="Periostin"/>
<dbReference type="GeneWiki" id="POSTN"/>
<dbReference type="GenomeRNAi" id="10631"/>
<dbReference type="Pharos" id="Q15063">
    <property type="development level" value="Tbio"/>
</dbReference>
<dbReference type="PRO" id="PR:Q15063"/>
<dbReference type="Proteomes" id="UP000005640">
    <property type="component" value="Chromosome 13"/>
</dbReference>
<dbReference type="RNAct" id="Q15063">
    <property type="molecule type" value="protein"/>
</dbReference>
<dbReference type="Bgee" id="ENSG00000133110">
    <property type="expression patterns" value="Expressed in periodontal ligament and 177 other cell types or tissues"/>
</dbReference>
<dbReference type="ExpressionAtlas" id="Q15063">
    <property type="expression patterns" value="baseline and differential"/>
</dbReference>
<dbReference type="GO" id="GO:0062023">
    <property type="term" value="C:collagen-containing extracellular matrix"/>
    <property type="evidence" value="ECO:0000314"/>
    <property type="project" value="UniProtKB"/>
</dbReference>
<dbReference type="GO" id="GO:0031012">
    <property type="term" value="C:extracellular matrix"/>
    <property type="evidence" value="ECO:0000250"/>
    <property type="project" value="UniProtKB"/>
</dbReference>
<dbReference type="GO" id="GO:0005615">
    <property type="term" value="C:extracellular space"/>
    <property type="evidence" value="ECO:0000318"/>
    <property type="project" value="GO_Central"/>
</dbReference>
<dbReference type="GO" id="GO:0031594">
    <property type="term" value="C:neuromuscular junction"/>
    <property type="evidence" value="ECO:0007669"/>
    <property type="project" value="Ensembl"/>
</dbReference>
<dbReference type="GO" id="GO:0005802">
    <property type="term" value="C:trans-Golgi network"/>
    <property type="evidence" value="ECO:0000314"/>
    <property type="project" value="BHF-UCL"/>
</dbReference>
<dbReference type="GO" id="GO:0050839">
    <property type="term" value="F:cell adhesion molecule binding"/>
    <property type="evidence" value="ECO:0000318"/>
    <property type="project" value="GO_Central"/>
</dbReference>
<dbReference type="GO" id="GO:0008201">
    <property type="term" value="F:heparin binding"/>
    <property type="evidence" value="ECO:0000250"/>
    <property type="project" value="UniProtKB"/>
</dbReference>
<dbReference type="GO" id="GO:0046872">
    <property type="term" value="F:metal ion binding"/>
    <property type="evidence" value="ECO:0000314"/>
    <property type="project" value="UniProtKB"/>
</dbReference>
<dbReference type="GO" id="GO:1990523">
    <property type="term" value="P:bone regeneration"/>
    <property type="evidence" value="ECO:0007669"/>
    <property type="project" value="Ensembl"/>
</dbReference>
<dbReference type="GO" id="GO:0007155">
    <property type="term" value="P:cell adhesion"/>
    <property type="evidence" value="ECO:0000314"/>
    <property type="project" value="UniProtKB"/>
</dbReference>
<dbReference type="GO" id="GO:0044344">
    <property type="term" value="P:cellular response to fibroblast growth factor stimulus"/>
    <property type="evidence" value="ECO:0007669"/>
    <property type="project" value="Ensembl"/>
</dbReference>
<dbReference type="GO" id="GO:0071560">
    <property type="term" value="P:cellular response to transforming growth factor beta stimulus"/>
    <property type="evidence" value="ECO:0007669"/>
    <property type="project" value="Ensembl"/>
</dbReference>
<dbReference type="GO" id="GO:0071356">
    <property type="term" value="P:cellular response to tumor necrosis factor"/>
    <property type="evidence" value="ECO:0007669"/>
    <property type="project" value="Ensembl"/>
</dbReference>
<dbReference type="GO" id="GO:0071307">
    <property type="term" value="P:cellular response to vitamin K"/>
    <property type="evidence" value="ECO:0000314"/>
    <property type="project" value="UniProtKB"/>
</dbReference>
<dbReference type="GO" id="GO:0030198">
    <property type="term" value="P:extracellular matrix organization"/>
    <property type="evidence" value="ECO:0000318"/>
    <property type="project" value="GO_Central"/>
</dbReference>
<dbReference type="GO" id="GO:0001953">
    <property type="term" value="P:negative regulation of cell-matrix adhesion"/>
    <property type="evidence" value="ECO:0007669"/>
    <property type="project" value="Ensembl"/>
</dbReference>
<dbReference type="GO" id="GO:1900025">
    <property type="term" value="P:negative regulation of substrate adhesion-dependent cell spreading"/>
    <property type="evidence" value="ECO:0007669"/>
    <property type="project" value="Ensembl"/>
</dbReference>
<dbReference type="GO" id="GO:1990138">
    <property type="term" value="P:neuron projection extension"/>
    <property type="evidence" value="ECO:0007669"/>
    <property type="project" value="Ensembl"/>
</dbReference>
<dbReference type="GO" id="GO:2000343">
    <property type="term" value="P:positive regulation of chemokine (C-X-C motif) ligand 2 production"/>
    <property type="evidence" value="ECO:0007669"/>
    <property type="project" value="Ensembl"/>
</dbReference>
<dbReference type="GO" id="GO:0014911">
    <property type="term" value="P:positive regulation of smooth muscle cell migration"/>
    <property type="evidence" value="ECO:0007669"/>
    <property type="project" value="Ensembl"/>
</dbReference>
<dbReference type="GO" id="GO:0008593">
    <property type="term" value="P:regulation of Notch signaling pathway"/>
    <property type="evidence" value="ECO:0007669"/>
    <property type="project" value="Ensembl"/>
</dbReference>
<dbReference type="GO" id="GO:0003073">
    <property type="term" value="P:regulation of systemic arterial blood pressure"/>
    <property type="evidence" value="ECO:0007669"/>
    <property type="project" value="Ensembl"/>
</dbReference>
<dbReference type="GO" id="GO:0032355">
    <property type="term" value="P:response to estradiol"/>
    <property type="evidence" value="ECO:0007669"/>
    <property type="project" value="Ensembl"/>
</dbReference>
<dbReference type="GO" id="GO:0001666">
    <property type="term" value="P:response to hypoxia"/>
    <property type="evidence" value="ECO:0007669"/>
    <property type="project" value="Ensembl"/>
</dbReference>
<dbReference type="GO" id="GO:0009612">
    <property type="term" value="P:response to mechanical stimulus"/>
    <property type="evidence" value="ECO:0007669"/>
    <property type="project" value="Ensembl"/>
</dbReference>
<dbReference type="GO" id="GO:0014850">
    <property type="term" value="P:response to muscle activity"/>
    <property type="evidence" value="ECO:0007669"/>
    <property type="project" value="Ensembl"/>
</dbReference>
<dbReference type="GO" id="GO:0009888">
    <property type="term" value="P:tissue development"/>
    <property type="evidence" value="ECO:0007669"/>
    <property type="project" value="Ensembl"/>
</dbReference>
<dbReference type="FunFam" id="2.30.180.10:FF:000001">
    <property type="entry name" value="periostin isoform X1"/>
    <property type="match status" value="1"/>
</dbReference>
<dbReference type="FunFam" id="2.30.180.10:FF:000002">
    <property type="entry name" value="periostin isoform X1"/>
    <property type="match status" value="1"/>
</dbReference>
<dbReference type="FunFam" id="2.30.180.10:FF:000003">
    <property type="entry name" value="periostin isoform X1"/>
    <property type="match status" value="1"/>
</dbReference>
<dbReference type="FunFam" id="2.30.180.10:FF:000004">
    <property type="entry name" value="periostin isoform X1"/>
    <property type="match status" value="1"/>
</dbReference>
<dbReference type="Gene3D" id="2.30.180.10">
    <property type="entry name" value="FAS1 domain"/>
    <property type="match status" value="4"/>
</dbReference>
<dbReference type="InterPro" id="IPR050904">
    <property type="entry name" value="Adhesion/Biosynth-related"/>
</dbReference>
<dbReference type="InterPro" id="IPR011489">
    <property type="entry name" value="EMI_domain"/>
</dbReference>
<dbReference type="InterPro" id="IPR036378">
    <property type="entry name" value="FAS1_dom_sf"/>
</dbReference>
<dbReference type="InterPro" id="IPR000782">
    <property type="entry name" value="FAS1_domain"/>
</dbReference>
<dbReference type="InterPro" id="IPR016666">
    <property type="entry name" value="TGFBI/POSTN"/>
</dbReference>
<dbReference type="PANTHER" id="PTHR10900:SF12">
    <property type="entry name" value="PERIOSTIN"/>
    <property type="match status" value="1"/>
</dbReference>
<dbReference type="PANTHER" id="PTHR10900">
    <property type="entry name" value="PERIOSTIN-RELATED"/>
    <property type="match status" value="1"/>
</dbReference>
<dbReference type="Pfam" id="PF02469">
    <property type="entry name" value="Fasciclin"/>
    <property type="match status" value="4"/>
</dbReference>
<dbReference type="PIRSF" id="PIRSF016553">
    <property type="entry name" value="BIGH3_OSF2"/>
    <property type="match status" value="1"/>
</dbReference>
<dbReference type="SMART" id="SM00554">
    <property type="entry name" value="FAS1"/>
    <property type="match status" value="4"/>
</dbReference>
<dbReference type="SUPFAM" id="SSF82153">
    <property type="entry name" value="FAS1 domain"/>
    <property type="match status" value="4"/>
</dbReference>
<dbReference type="PROSITE" id="PS51041">
    <property type="entry name" value="EMI"/>
    <property type="match status" value="1"/>
</dbReference>
<dbReference type="PROSITE" id="PS50213">
    <property type="entry name" value="FAS1"/>
    <property type="match status" value="4"/>
</dbReference>